<gene>
    <name evidence="1" type="primary">aroD</name>
    <name type="ordered locus">SH2055</name>
</gene>
<reference key="1">
    <citation type="journal article" date="2005" name="J. Bacteriol.">
        <title>Whole-genome sequencing of Staphylococcus haemolyticus uncovers the extreme plasticity of its genome and the evolution of human-colonizing staphylococcal species.</title>
        <authorList>
            <person name="Takeuchi F."/>
            <person name="Watanabe S."/>
            <person name="Baba T."/>
            <person name="Yuzawa H."/>
            <person name="Ito T."/>
            <person name="Morimoto Y."/>
            <person name="Kuroda M."/>
            <person name="Cui L."/>
            <person name="Takahashi M."/>
            <person name="Ankai A."/>
            <person name="Baba S."/>
            <person name="Fukui S."/>
            <person name="Lee J.C."/>
            <person name="Hiramatsu K."/>
        </authorList>
    </citation>
    <scope>NUCLEOTIDE SEQUENCE [LARGE SCALE GENOMIC DNA]</scope>
    <source>
        <strain>JCSC1435</strain>
    </source>
</reference>
<protein>
    <recommendedName>
        <fullName evidence="1">3-dehydroquinate dehydratase</fullName>
        <shortName evidence="1">3-dehydroquinase</shortName>
        <ecNumber evidence="1">4.2.1.10</ecNumber>
    </recommendedName>
    <alternativeName>
        <fullName evidence="1">Type I DHQase</fullName>
    </alternativeName>
    <alternativeName>
        <fullName evidence="1">Type I dehydroquinase</fullName>
        <shortName evidence="1">DHQ1</shortName>
    </alternativeName>
</protein>
<comment type="function">
    <text evidence="1">Involved in the third step of the chorismate pathway, which leads to the biosynthesis of aromatic amino acids. Catalyzes the cis-dehydration of 3-dehydroquinate (DHQ) and introduces the first double bond of the aromatic ring to yield 3-dehydroshikimate.</text>
</comment>
<comment type="catalytic activity">
    <reaction evidence="1">
        <text>3-dehydroquinate = 3-dehydroshikimate + H2O</text>
        <dbReference type="Rhea" id="RHEA:21096"/>
        <dbReference type="ChEBI" id="CHEBI:15377"/>
        <dbReference type="ChEBI" id="CHEBI:16630"/>
        <dbReference type="ChEBI" id="CHEBI:32364"/>
        <dbReference type="EC" id="4.2.1.10"/>
    </reaction>
</comment>
<comment type="pathway">
    <text evidence="1">Metabolic intermediate biosynthesis; chorismate biosynthesis; chorismate from D-erythrose 4-phosphate and phosphoenolpyruvate: step 3/7.</text>
</comment>
<comment type="subunit">
    <text evidence="1">Homodimer.</text>
</comment>
<comment type="similarity">
    <text evidence="1">Belongs to the type-I 3-dehydroquinase family.</text>
</comment>
<proteinExistence type="inferred from homology"/>
<name>AROD_STAHJ</name>
<evidence type="ECO:0000255" key="1">
    <source>
        <dbReference type="HAMAP-Rule" id="MF_00214"/>
    </source>
</evidence>
<dbReference type="EC" id="4.2.1.10" evidence="1"/>
<dbReference type="EMBL" id="AP006716">
    <property type="protein sequence ID" value="BAE05364.1"/>
    <property type="molecule type" value="Genomic_DNA"/>
</dbReference>
<dbReference type="RefSeq" id="WP_011276319.1">
    <property type="nucleotide sequence ID" value="NC_007168.1"/>
</dbReference>
<dbReference type="SMR" id="Q4L4R1"/>
<dbReference type="KEGG" id="sha:SH2055"/>
<dbReference type="eggNOG" id="COG0710">
    <property type="taxonomic scope" value="Bacteria"/>
</dbReference>
<dbReference type="HOGENOM" id="CLU_064444_2_1_9"/>
<dbReference type="OrthoDB" id="9813659at2"/>
<dbReference type="UniPathway" id="UPA00053">
    <property type="reaction ID" value="UER00086"/>
</dbReference>
<dbReference type="Proteomes" id="UP000000543">
    <property type="component" value="Chromosome"/>
</dbReference>
<dbReference type="GO" id="GO:0003855">
    <property type="term" value="F:3-dehydroquinate dehydratase activity"/>
    <property type="evidence" value="ECO:0007669"/>
    <property type="project" value="UniProtKB-UniRule"/>
</dbReference>
<dbReference type="GO" id="GO:0046279">
    <property type="term" value="P:3,4-dihydroxybenzoate biosynthetic process"/>
    <property type="evidence" value="ECO:0007669"/>
    <property type="project" value="TreeGrafter"/>
</dbReference>
<dbReference type="GO" id="GO:0008652">
    <property type="term" value="P:amino acid biosynthetic process"/>
    <property type="evidence" value="ECO:0007669"/>
    <property type="project" value="UniProtKB-KW"/>
</dbReference>
<dbReference type="GO" id="GO:0009073">
    <property type="term" value="P:aromatic amino acid family biosynthetic process"/>
    <property type="evidence" value="ECO:0007669"/>
    <property type="project" value="UniProtKB-KW"/>
</dbReference>
<dbReference type="GO" id="GO:0009423">
    <property type="term" value="P:chorismate biosynthetic process"/>
    <property type="evidence" value="ECO:0007669"/>
    <property type="project" value="UniProtKB-UniRule"/>
</dbReference>
<dbReference type="CDD" id="cd00502">
    <property type="entry name" value="DHQase_I"/>
    <property type="match status" value="1"/>
</dbReference>
<dbReference type="FunFam" id="3.20.20.70:FF:000047">
    <property type="entry name" value="3-dehydroquinate dehydratase"/>
    <property type="match status" value="1"/>
</dbReference>
<dbReference type="Gene3D" id="3.20.20.70">
    <property type="entry name" value="Aldolase class I"/>
    <property type="match status" value="1"/>
</dbReference>
<dbReference type="HAMAP" id="MF_00214">
    <property type="entry name" value="AroD"/>
    <property type="match status" value="1"/>
</dbReference>
<dbReference type="InterPro" id="IPR013785">
    <property type="entry name" value="Aldolase_TIM"/>
</dbReference>
<dbReference type="InterPro" id="IPR001381">
    <property type="entry name" value="DHquinase_I"/>
</dbReference>
<dbReference type="InterPro" id="IPR050146">
    <property type="entry name" value="Type-I_3-dehydroquinase"/>
</dbReference>
<dbReference type="NCBIfam" id="TIGR01093">
    <property type="entry name" value="aroD"/>
    <property type="match status" value="1"/>
</dbReference>
<dbReference type="PANTHER" id="PTHR43699">
    <property type="entry name" value="3-DEHYDROQUINATE DEHYDRATASE"/>
    <property type="match status" value="1"/>
</dbReference>
<dbReference type="PANTHER" id="PTHR43699:SF1">
    <property type="entry name" value="3-DEHYDROQUINATE DEHYDRATASE"/>
    <property type="match status" value="1"/>
</dbReference>
<dbReference type="Pfam" id="PF01487">
    <property type="entry name" value="DHquinase_I"/>
    <property type="match status" value="1"/>
</dbReference>
<dbReference type="SUPFAM" id="SSF51569">
    <property type="entry name" value="Aldolase"/>
    <property type="match status" value="1"/>
</dbReference>
<sequence>MTNVEVAATVAPNQLLDTLTLDNIKEYSNDIDIIELRIDQWEDRHLELLKSNLEQLQELNINANVLVTYRTISQGGKGEMTHEAYMTLLKEIIKNHHCQMIDIEWDSDFDVFAHRDLINLAHRYNKQVVISYHNFQETPDIDILKFTYYKMNQLNPDYVKIAVMPQDKEDVATLLEAVATSADTLDAKVIGISMSKVGLVSRTAQGVFGGTVSYGCLGEPQAPGQIHVKTLKQQLLFYSNH</sequence>
<feature type="chain" id="PRO_1000043189" description="3-dehydroquinate dehydratase">
    <location>
        <begin position="1"/>
        <end position="241"/>
    </location>
</feature>
<feature type="active site" description="Proton donor/acceptor" evidence="1">
    <location>
        <position position="133"/>
    </location>
</feature>
<feature type="active site" description="Schiff-base intermediate with substrate" evidence="1">
    <location>
        <position position="160"/>
    </location>
</feature>
<feature type="binding site" evidence="1">
    <location>
        <begin position="35"/>
        <end position="37"/>
    </location>
    <ligand>
        <name>3-dehydroquinate</name>
        <dbReference type="ChEBI" id="CHEBI:32364"/>
    </ligand>
</feature>
<feature type="binding site" evidence="1">
    <location>
        <position position="70"/>
    </location>
    <ligand>
        <name>3-dehydroquinate</name>
        <dbReference type="ChEBI" id="CHEBI:32364"/>
    </ligand>
</feature>
<feature type="binding site" evidence="1">
    <location>
        <position position="202"/>
    </location>
    <ligand>
        <name>3-dehydroquinate</name>
        <dbReference type="ChEBI" id="CHEBI:32364"/>
    </ligand>
</feature>
<feature type="binding site" evidence="1">
    <location>
        <position position="225"/>
    </location>
    <ligand>
        <name>3-dehydroquinate</name>
        <dbReference type="ChEBI" id="CHEBI:32364"/>
    </ligand>
</feature>
<organism>
    <name type="scientific">Staphylococcus haemolyticus (strain JCSC1435)</name>
    <dbReference type="NCBI Taxonomy" id="279808"/>
    <lineage>
        <taxon>Bacteria</taxon>
        <taxon>Bacillati</taxon>
        <taxon>Bacillota</taxon>
        <taxon>Bacilli</taxon>
        <taxon>Bacillales</taxon>
        <taxon>Staphylococcaceae</taxon>
        <taxon>Staphylococcus</taxon>
    </lineage>
</organism>
<keyword id="KW-0028">Amino-acid biosynthesis</keyword>
<keyword id="KW-0057">Aromatic amino acid biosynthesis</keyword>
<keyword id="KW-0456">Lyase</keyword>
<keyword id="KW-0704">Schiff base</keyword>
<accession>Q4L4R1</accession>